<feature type="chain" id="PRO_1000044935" description="Pole-localizer protein TmaR">
    <location>
        <begin position="1"/>
        <end position="111"/>
    </location>
</feature>
<feature type="coiled-coil region" evidence="1">
    <location>
        <begin position="14"/>
        <end position="41"/>
    </location>
</feature>
<comment type="function">
    <text evidence="1">Pole-localizer protein involved in the regulation of several cellular processes.</text>
</comment>
<comment type="subcellular location">
    <subcellularLocation>
        <location evidence="1">Cytoplasm</location>
    </subcellularLocation>
    <text evidence="1">Forms clusters that localize mainly near one pole of the cell.</text>
</comment>
<comment type="similarity">
    <text evidence="1">Belongs to the pole-localizer TmaR family.</text>
</comment>
<sequence>METTKPSFQDVLEFVRLFRRKNKLQREIQDIEKKIRDNQKRVLLLDNLSDYIKPGMSVEAIQGIIASMKSDYEDRVDDYIIKNAEISKERRDISKKLKAMGEMKHADVKAE</sequence>
<name>TMAR_SALCH</name>
<keyword id="KW-0175">Coiled coil</keyword>
<keyword id="KW-0963">Cytoplasm</keyword>
<gene>
    <name evidence="1" type="primary">tmaR</name>
    <name type="ordered locus">SCH_2068</name>
</gene>
<reference key="1">
    <citation type="journal article" date="2005" name="Nucleic Acids Res.">
        <title>The genome sequence of Salmonella enterica serovar Choleraesuis, a highly invasive and resistant zoonotic pathogen.</title>
        <authorList>
            <person name="Chiu C.-H."/>
            <person name="Tang P."/>
            <person name="Chu C."/>
            <person name="Hu S."/>
            <person name="Bao Q."/>
            <person name="Yu J."/>
            <person name="Chou Y.-Y."/>
            <person name="Wang H.-S."/>
            <person name="Lee Y.-S."/>
        </authorList>
    </citation>
    <scope>NUCLEOTIDE SEQUENCE [LARGE SCALE GENOMIC DNA]</scope>
    <source>
        <strain>SC-B67</strain>
    </source>
</reference>
<evidence type="ECO:0000255" key="1">
    <source>
        <dbReference type="HAMAP-Rule" id="MF_00683"/>
    </source>
</evidence>
<protein>
    <recommendedName>
        <fullName evidence="1">Pole-localizer protein TmaR</fullName>
    </recommendedName>
</protein>
<organism>
    <name type="scientific">Salmonella choleraesuis (strain SC-B67)</name>
    <dbReference type="NCBI Taxonomy" id="321314"/>
    <lineage>
        <taxon>Bacteria</taxon>
        <taxon>Pseudomonadati</taxon>
        <taxon>Pseudomonadota</taxon>
        <taxon>Gammaproteobacteria</taxon>
        <taxon>Enterobacterales</taxon>
        <taxon>Enterobacteriaceae</taxon>
        <taxon>Salmonella</taxon>
    </lineage>
</organism>
<accession>Q57MT7</accession>
<proteinExistence type="inferred from homology"/>
<dbReference type="EMBL" id="AE017220">
    <property type="protein sequence ID" value="AAX65974.1"/>
    <property type="molecule type" value="Genomic_DNA"/>
</dbReference>
<dbReference type="RefSeq" id="WP_000450405.1">
    <property type="nucleotide sequence ID" value="NC_006905.1"/>
</dbReference>
<dbReference type="SMR" id="Q57MT7"/>
<dbReference type="KEGG" id="sec:SCH_2068"/>
<dbReference type="HOGENOM" id="CLU_153146_0_0_6"/>
<dbReference type="Proteomes" id="UP000000538">
    <property type="component" value="Chromosome"/>
</dbReference>
<dbReference type="GO" id="GO:0005829">
    <property type="term" value="C:cytosol"/>
    <property type="evidence" value="ECO:0007669"/>
    <property type="project" value="TreeGrafter"/>
</dbReference>
<dbReference type="HAMAP" id="MF_00683">
    <property type="entry name" value="Pole_loc_TmaR"/>
    <property type="match status" value="1"/>
</dbReference>
<dbReference type="InterPro" id="IPR007458">
    <property type="entry name" value="DUF496"/>
</dbReference>
<dbReference type="InterPro" id="IPR053375">
    <property type="entry name" value="UPF0265"/>
</dbReference>
<dbReference type="NCBIfam" id="NF003844">
    <property type="entry name" value="PRK05423.1"/>
    <property type="match status" value="1"/>
</dbReference>
<dbReference type="NCBIfam" id="NF040881">
    <property type="entry name" value="PTS_reg_TmaR"/>
    <property type="match status" value="1"/>
</dbReference>
<dbReference type="PANTHER" id="PTHR39591">
    <property type="entry name" value="UPF0265 PROTEIN YEEX"/>
    <property type="match status" value="1"/>
</dbReference>
<dbReference type="PANTHER" id="PTHR39591:SF1">
    <property type="entry name" value="UPF0265 PROTEIN YEEX"/>
    <property type="match status" value="1"/>
</dbReference>
<dbReference type="Pfam" id="PF04363">
    <property type="entry name" value="DUF496"/>
    <property type="match status" value="1"/>
</dbReference>
<dbReference type="PIRSF" id="PIRSF028773">
    <property type="entry name" value="UCP028773"/>
    <property type="match status" value="1"/>
</dbReference>